<comment type="function">
    <text evidence="1">Forms part of a complex involved in intraflagellar transport (IFT), the bi-directional movement of particles required for the assembly, maintenance and functioning of primary cilia. May play a role in chondrocyte maturation and skeletogenesis (By similarity).</text>
</comment>
<comment type="subunit">
    <text evidence="2 5 6">Component of the IFT complex B, at least composed of IFT20, IFT22, IFT25, IFT27, IFT46, IFT52, TRAF3IP1/IFT54, IFT57, IFT74, IFT80, IFT81, and IFT88. Interacts with IFT57, IFT88 and DAW1. Interacts with IFT56 (By similarity). Interacts with ARL13B. Interacts with TTC25 (PubMed:25860617). Interacts with IFT70B (By similarity).</text>
</comment>
<comment type="subcellular location">
    <subcellularLocation>
        <location evidence="1">Cytoplasm</location>
        <location evidence="1">Cytoskeleton</location>
        <location evidence="1">Cilium basal body</location>
    </subcellularLocation>
    <subcellularLocation>
        <location evidence="1">Cell projection</location>
        <location evidence="1">Cilium</location>
    </subcellularLocation>
    <text evidence="1">Expression is concentrated at the cilium basal body but is also detected along the length of the cilium.</text>
</comment>
<comment type="alternative products">
    <event type="alternative splicing"/>
    <isoform>
        <id>Q9NQC8-1</id>
        <name>1</name>
        <sequence type="displayed"/>
    </isoform>
    <isoform>
        <id>Q9NQC8-2</id>
        <name>2</name>
        <sequence type="described" ref="VSP_039859"/>
    </isoform>
</comment>
<comment type="similarity">
    <text evidence="8">Belongs to the IFT46 family.</text>
</comment>
<comment type="caution">
    <text evidence="9">Has been termed C11orf2, but is not the official C11orf2 as defined by HGNC.</text>
</comment>
<reference key="1">
    <citation type="journal article" date="2000" name="Biochem. Biophys. Res. Commun.">
        <title>Characterization of five novel human genes in the 11q13-q22 region.</title>
        <authorList>
            <person name="O'Brien K.P."/>
            <person name="Tapia-Paez I."/>
            <person name="Staahle-Baeckdahl M."/>
            <person name="Kedra D."/>
            <person name="Dumanski J.P."/>
        </authorList>
    </citation>
    <scope>NUCLEOTIDE SEQUENCE [MRNA] (ISOFORM 1)</scope>
</reference>
<reference key="2">
    <citation type="journal article" date="2001" name="Genome Res.">
        <title>Towards a catalog of human genes and proteins: sequencing and analysis of 500 novel complete protein coding human cDNAs.</title>
        <authorList>
            <person name="Wiemann S."/>
            <person name="Weil B."/>
            <person name="Wellenreuther R."/>
            <person name="Gassenhuber J."/>
            <person name="Glassl S."/>
            <person name="Ansorge W."/>
            <person name="Boecher M."/>
            <person name="Bloecker H."/>
            <person name="Bauersachs S."/>
            <person name="Blum H."/>
            <person name="Lauber J."/>
            <person name="Duesterhoeft A."/>
            <person name="Beyer A."/>
            <person name="Koehrer K."/>
            <person name="Strack N."/>
            <person name="Mewes H.-W."/>
            <person name="Ottenwaelder B."/>
            <person name="Obermaier B."/>
            <person name="Tampe J."/>
            <person name="Heubner D."/>
            <person name="Wambutt R."/>
            <person name="Korn B."/>
            <person name="Klein M."/>
            <person name="Poustka A."/>
        </authorList>
    </citation>
    <scope>NUCLEOTIDE SEQUENCE [LARGE SCALE MRNA] (ISOFORM 1)</scope>
    <source>
        <tissue>Uterus</tissue>
    </source>
</reference>
<reference key="3">
    <citation type="journal article" date="2004" name="Nat. Genet.">
        <title>Complete sequencing and characterization of 21,243 full-length human cDNAs.</title>
        <authorList>
            <person name="Ota T."/>
            <person name="Suzuki Y."/>
            <person name="Nishikawa T."/>
            <person name="Otsuki T."/>
            <person name="Sugiyama T."/>
            <person name="Irie R."/>
            <person name="Wakamatsu A."/>
            <person name="Hayashi K."/>
            <person name="Sato H."/>
            <person name="Nagai K."/>
            <person name="Kimura K."/>
            <person name="Makita H."/>
            <person name="Sekine M."/>
            <person name="Obayashi M."/>
            <person name="Nishi T."/>
            <person name="Shibahara T."/>
            <person name="Tanaka T."/>
            <person name="Ishii S."/>
            <person name="Yamamoto J."/>
            <person name="Saito K."/>
            <person name="Kawai Y."/>
            <person name="Isono Y."/>
            <person name="Nakamura Y."/>
            <person name="Nagahari K."/>
            <person name="Murakami K."/>
            <person name="Yasuda T."/>
            <person name="Iwayanagi T."/>
            <person name="Wagatsuma M."/>
            <person name="Shiratori A."/>
            <person name="Sudo H."/>
            <person name="Hosoiri T."/>
            <person name="Kaku Y."/>
            <person name="Kodaira H."/>
            <person name="Kondo H."/>
            <person name="Sugawara M."/>
            <person name="Takahashi M."/>
            <person name="Kanda K."/>
            <person name="Yokoi T."/>
            <person name="Furuya T."/>
            <person name="Kikkawa E."/>
            <person name="Omura Y."/>
            <person name="Abe K."/>
            <person name="Kamihara K."/>
            <person name="Katsuta N."/>
            <person name="Sato K."/>
            <person name="Tanikawa M."/>
            <person name="Yamazaki M."/>
            <person name="Ninomiya K."/>
            <person name="Ishibashi T."/>
            <person name="Yamashita H."/>
            <person name="Murakawa K."/>
            <person name="Fujimori K."/>
            <person name="Tanai H."/>
            <person name="Kimata M."/>
            <person name="Watanabe M."/>
            <person name="Hiraoka S."/>
            <person name="Chiba Y."/>
            <person name="Ishida S."/>
            <person name="Ono Y."/>
            <person name="Takiguchi S."/>
            <person name="Watanabe S."/>
            <person name="Yosida M."/>
            <person name="Hotuta T."/>
            <person name="Kusano J."/>
            <person name="Kanehori K."/>
            <person name="Takahashi-Fujii A."/>
            <person name="Hara H."/>
            <person name="Tanase T.-O."/>
            <person name="Nomura Y."/>
            <person name="Togiya S."/>
            <person name="Komai F."/>
            <person name="Hara R."/>
            <person name="Takeuchi K."/>
            <person name="Arita M."/>
            <person name="Imose N."/>
            <person name="Musashino K."/>
            <person name="Yuuki H."/>
            <person name="Oshima A."/>
            <person name="Sasaki N."/>
            <person name="Aotsuka S."/>
            <person name="Yoshikawa Y."/>
            <person name="Matsunawa H."/>
            <person name="Ichihara T."/>
            <person name="Shiohata N."/>
            <person name="Sano S."/>
            <person name="Moriya S."/>
            <person name="Momiyama H."/>
            <person name="Satoh N."/>
            <person name="Takami S."/>
            <person name="Terashima Y."/>
            <person name="Suzuki O."/>
            <person name="Nakagawa S."/>
            <person name="Senoh A."/>
            <person name="Mizoguchi H."/>
            <person name="Goto Y."/>
            <person name="Shimizu F."/>
            <person name="Wakebe H."/>
            <person name="Hishigaki H."/>
            <person name="Watanabe T."/>
            <person name="Sugiyama A."/>
            <person name="Takemoto M."/>
            <person name="Kawakami B."/>
            <person name="Yamazaki M."/>
            <person name="Watanabe K."/>
            <person name="Kumagai A."/>
            <person name="Itakura S."/>
            <person name="Fukuzumi Y."/>
            <person name="Fujimori Y."/>
            <person name="Komiyama M."/>
            <person name="Tashiro H."/>
            <person name="Tanigami A."/>
            <person name="Fujiwara T."/>
            <person name="Ono T."/>
            <person name="Yamada K."/>
            <person name="Fujii Y."/>
            <person name="Ozaki K."/>
            <person name="Hirao M."/>
            <person name="Ohmori Y."/>
            <person name="Kawabata A."/>
            <person name="Hikiji T."/>
            <person name="Kobatake N."/>
            <person name="Inagaki H."/>
            <person name="Ikema Y."/>
            <person name="Okamoto S."/>
            <person name="Okitani R."/>
            <person name="Kawakami T."/>
            <person name="Noguchi S."/>
            <person name="Itoh T."/>
            <person name="Shigeta K."/>
            <person name="Senba T."/>
            <person name="Matsumura K."/>
            <person name="Nakajima Y."/>
            <person name="Mizuno T."/>
            <person name="Morinaga M."/>
            <person name="Sasaki M."/>
            <person name="Togashi T."/>
            <person name="Oyama M."/>
            <person name="Hata H."/>
            <person name="Watanabe M."/>
            <person name="Komatsu T."/>
            <person name="Mizushima-Sugano J."/>
            <person name="Satoh T."/>
            <person name="Shirai Y."/>
            <person name="Takahashi Y."/>
            <person name="Nakagawa K."/>
            <person name="Okumura K."/>
            <person name="Nagase T."/>
            <person name="Nomura N."/>
            <person name="Kikuchi H."/>
            <person name="Masuho Y."/>
            <person name="Yamashita R."/>
            <person name="Nakai K."/>
            <person name="Yada T."/>
            <person name="Nakamura Y."/>
            <person name="Ohara O."/>
            <person name="Isogai T."/>
            <person name="Sugano S."/>
        </authorList>
    </citation>
    <scope>NUCLEOTIDE SEQUENCE [LARGE SCALE MRNA] (ISOFORMS 1 AND 2)</scope>
    <scope>VARIANT TYR-9</scope>
    <source>
        <tissue>Cerebellum</tissue>
        <tissue>Hepatoma</tissue>
    </source>
</reference>
<reference key="4">
    <citation type="submission" date="2004-06" db="EMBL/GenBank/DDBJ databases">
        <title>Cloning of human full open reading frames in Gateway(TM) system entry vector (pDONR201).</title>
        <authorList>
            <person name="Ebert L."/>
            <person name="Schick M."/>
            <person name="Neubert P."/>
            <person name="Schatten R."/>
            <person name="Henze S."/>
            <person name="Korn B."/>
        </authorList>
    </citation>
    <scope>NUCLEOTIDE SEQUENCE [LARGE SCALE MRNA] (ISOFORM 1)</scope>
</reference>
<reference key="5">
    <citation type="journal article" date="2006" name="Nature">
        <title>Human chromosome 11 DNA sequence and analysis including novel gene identification.</title>
        <authorList>
            <person name="Taylor T.D."/>
            <person name="Noguchi H."/>
            <person name="Totoki Y."/>
            <person name="Toyoda A."/>
            <person name="Kuroki Y."/>
            <person name="Dewar K."/>
            <person name="Lloyd C."/>
            <person name="Itoh T."/>
            <person name="Takeda T."/>
            <person name="Kim D.-W."/>
            <person name="She X."/>
            <person name="Barlow K.F."/>
            <person name="Bloom T."/>
            <person name="Bruford E."/>
            <person name="Chang J.L."/>
            <person name="Cuomo C.A."/>
            <person name="Eichler E."/>
            <person name="FitzGerald M.G."/>
            <person name="Jaffe D.B."/>
            <person name="LaButti K."/>
            <person name="Nicol R."/>
            <person name="Park H.-S."/>
            <person name="Seaman C."/>
            <person name="Sougnez C."/>
            <person name="Yang X."/>
            <person name="Zimmer A.R."/>
            <person name="Zody M.C."/>
            <person name="Birren B.W."/>
            <person name="Nusbaum C."/>
            <person name="Fujiyama A."/>
            <person name="Hattori M."/>
            <person name="Rogers J."/>
            <person name="Lander E.S."/>
            <person name="Sakaki Y."/>
        </authorList>
    </citation>
    <scope>NUCLEOTIDE SEQUENCE [LARGE SCALE GENOMIC DNA]</scope>
</reference>
<reference key="6">
    <citation type="journal article" date="2004" name="Genome Res.">
        <title>The status, quality, and expansion of the NIH full-length cDNA project: the Mammalian Gene Collection (MGC).</title>
        <authorList>
            <consortium name="The MGC Project Team"/>
        </authorList>
    </citation>
    <scope>NUCLEOTIDE SEQUENCE [LARGE SCALE MRNA] (ISOFORM 1)</scope>
    <source>
        <tissue>Bone marrow</tissue>
        <tissue>Lung</tissue>
        <tissue>Uterus</tissue>
    </source>
</reference>
<reference key="7">
    <citation type="journal article" date="2013" name="PLoS Genet.">
        <title>Active transport and diffusion barriers restrict Joubert syndrome-associated ARL13B/ARL-13 to an inv-like ciliary membrane subdomain.</title>
        <authorList>
            <person name="Cevik S."/>
            <person name="Sanders A.A."/>
            <person name="Van Wijk E."/>
            <person name="Boldt K."/>
            <person name="Clarke L."/>
            <person name="van Reeuwijk J."/>
            <person name="Hori Y."/>
            <person name="Horn N."/>
            <person name="Hetterschijt L."/>
            <person name="Wdowicz A."/>
            <person name="Mullins A."/>
            <person name="Kida K."/>
            <person name="Kaplan O.I."/>
            <person name="van Beersum S.E."/>
            <person name="Man Wu K."/>
            <person name="Letteboer S.J."/>
            <person name="Mans D.A."/>
            <person name="Katada T."/>
            <person name="Kontani K."/>
            <person name="Ueffing M."/>
            <person name="Roepman R."/>
            <person name="Kremer H."/>
            <person name="Blacque O.E."/>
        </authorList>
    </citation>
    <scope>INTERACTION WITH ARL13B</scope>
</reference>
<reference key="8">
    <citation type="journal article" date="2015" name="PLoS ONE">
        <title>Characterization of tetratricopeptide repeat-containing proteins critical for cilia formation and function.</title>
        <authorList>
            <person name="Xu Y."/>
            <person name="Cao J."/>
            <person name="Huang S."/>
            <person name="Feng D."/>
            <person name="Zhang W."/>
            <person name="Zhu X."/>
            <person name="Yan X."/>
        </authorList>
    </citation>
    <scope>INTERACTION WITH TTC25</scope>
</reference>
<dbReference type="EMBL" id="AJ249980">
    <property type="protein sequence ID" value="CAB96537.1"/>
    <property type="molecule type" value="mRNA"/>
</dbReference>
<dbReference type="EMBL" id="AL136934">
    <property type="protein sequence ID" value="CAB66868.1"/>
    <property type="molecule type" value="mRNA"/>
</dbReference>
<dbReference type="EMBL" id="AK025480">
    <property type="protein sequence ID" value="BAB15146.1"/>
    <property type="molecule type" value="mRNA"/>
</dbReference>
<dbReference type="EMBL" id="AK289521">
    <property type="protein sequence ID" value="BAF82210.1"/>
    <property type="molecule type" value="mRNA"/>
</dbReference>
<dbReference type="EMBL" id="CR457344">
    <property type="protein sequence ID" value="CAG33625.1"/>
    <property type="molecule type" value="mRNA"/>
</dbReference>
<dbReference type="EMBL" id="AP000941">
    <property type="status" value="NOT_ANNOTATED_CDS"/>
    <property type="molecule type" value="Genomic_DNA"/>
</dbReference>
<dbReference type="EMBL" id="BC011647">
    <property type="protein sequence ID" value="AAH11647.1"/>
    <property type="molecule type" value="mRNA"/>
</dbReference>
<dbReference type="EMBL" id="BC012802">
    <property type="protein sequence ID" value="AAH12802.1"/>
    <property type="molecule type" value="mRNA"/>
</dbReference>
<dbReference type="EMBL" id="BC022856">
    <property type="protein sequence ID" value="AAH22856.1"/>
    <property type="molecule type" value="mRNA"/>
</dbReference>
<dbReference type="CCDS" id="CCDS53718.1">
    <molecule id="Q9NQC8-1"/>
</dbReference>
<dbReference type="CCDS" id="CCDS8399.1">
    <molecule id="Q9NQC8-2"/>
</dbReference>
<dbReference type="RefSeq" id="NP_001162089.1">
    <molecule id="Q9NQC8-1"/>
    <property type="nucleotide sequence ID" value="NM_001168618.2"/>
</dbReference>
<dbReference type="RefSeq" id="NP_064538.3">
    <molecule id="Q9NQC8-2"/>
    <property type="nucleotide sequence ID" value="NM_020153.3"/>
</dbReference>
<dbReference type="RefSeq" id="XP_011541207.1">
    <molecule id="Q9NQC8-2"/>
    <property type="nucleotide sequence ID" value="XM_011542905.4"/>
</dbReference>
<dbReference type="RefSeq" id="XP_011541208.1">
    <molecule id="Q9NQC8-1"/>
    <property type="nucleotide sequence ID" value="XM_011542906.4"/>
</dbReference>
<dbReference type="RefSeq" id="XP_016873506.1">
    <molecule id="Q9NQC8-2"/>
    <property type="nucleotide sequence ID" value="XM_017018017.2"/>
</dbReference>
<dbReference type="RefSeq" id="XP_016873507.1">
    <molecule id="Q9NQC8-1"/>
    <property type="nucleotide sequence ID" value="XM_017018018.3"/>
</dbReference>
<dbReference type="RefSeq" id="XP_054225353.1">
    <molecule id="Q9NQC8-2"/>
    <property type="nucleotide sequence ID" value="XM_054369378.1"/>
</dbReference>
<dbReference type="RefSeq" id="XP_054225354.1">
    <molecule id="Q9NQC8-2"/>
    <property type="nucleotide sequence ID" value="XM_054369379.1"/>
</dbReference>
<dbReference type="RefSeq" id="XP_054225355.1">
    <molecule id="Q9NQC8-1"/>
    <property type="nucleotide sequence ID" value="XM_054369380.1"/>
</dbReference>
<dbReference type="RefSeq" id="XP_054225356.1">
    <molecule id="Q9NQC8-1"/>
    <property type="nucleotide sequence ID" value="XM_054369381.1"/>
</dbReference>
<dbReference type="SMR" id="Q9NQC8"/>
<dbReference type="BioGRID" id="121240">
    <property type="interactions" value="42"/>
</dbReference>
<dbReference type="ComplexPortal" id="CPX-5022">
    <property type="entry name" value="Intraflagellar transport complex B"/>
</dbReference>
<dbReference type="CORUM" id="Q9NQC8"/>
<dbReference type="FunCoup" id="Q9NQC8">
    <property type="interactions" value="413"/>
</dbReference>
<dbReference type="IntAct" id="Q9NQC8">
    <property type="interactions" value="31"/>
</dbReference>
<dbReference type="STRING" id="9606.ENSP00000264020"/>
<dbReference type="TCDB" id="1.X.1.1.1">
    <property type="family name" value="the intraflagellar transporter-a complex (ift-a) family"/>
</dbReference>
<dbReference type="GlyGen" id="Q9NQC8">
    <property type="glycosylation" value="1 site, 1 O-linked glycan (1 site)"/>
</dbReference>
<dbReference type="iPTMnet" id="Q9NQC8"/>
<dbReference type="PhosphoSitePlus" id="Q9NQC8"/>
<dbReference type="BioMuta" id="IFT46"/>
<dbReference type="DMDM" id="74734313"/>
<dbReference type="jPOST" id="Q9NQC8"/>
<dbReference type="MassIVE" id="Q9NQC8"/>
<dbReference type="PeptideAtlas" id="Q9NQC8"/>
<dbReference type="ProteomicsDB" id="82141">
    <molecule id="Q9NQC8-1"/>
</dbReference>
<dbReference type="ProteomicsDB" id="82142">
    <molecule id="Q9NQC8-2"/>
</dbReference>
<dbReference type="Pumba" id="Q9NQC8"/>
<dbReference type="Antibodypedia" id="52642">
    <property type="antibodies" value="43 antibodies from 11 providers"/>
</dbReference>
<dbReference type="DNASU" id="56912"/>
<dbReference type="Ensembl" id="ENST00000264020.6">
    <molecule id="Q9NQC8-2"/>
    <property type="protein sequence ID" value="ENSP00000264020.2"/>
    <property type="gene ID" value="ENSG00000118096.10"/>
</dbReference>
<dbReference type="Ensembl" id="ENST00000264021.8">
    <molecule id="Q9NQC8-1"/>
    <property type="protein sequence ID" value="ENSP00000264021.3"/>
    <property type="gene ID" value="ENSG00000118096.10"/>
</dbReference>
<dbReference type="GeneID" id="56912"/>
<dbReference type="KEGG" id="hsa:56912"/>
<dbReference type="MANE-Select" id="ENST00000264021.8">
    <property type="protein sequence ID" value="ENSP00000264021.3"/>
    <property type="RefSeq nucleotide sequence ID" value="NM_001168618.2"/>
    <property type="RefSeq protein sequence ID" value="NP_001162089.1"/>
</dbReference>
<dbReference type="UCSC" id="uc001pto.3">
    <molecule id="Q9NQC8-1"/>
    <property type="organism name" value="human"/>
</dbReference>
<dbReference type="AGR" id="HGNC:26146"/>
<dbReference type="CTD" id="56912"/>
<dbReference type="DisGeNET" id="56912"/>
<dbReference type="GeneCards" id="IFT46"/>
<dbReference type="HGNC" id="HGNC:26146">
    <property type="gene designation" value="IFT46"/>
</dbReference>
<dbReference type="HPA" id="ENSG00000118096">
    <property type="expression patterns" value="Low tissue specificity"/>
</dbReference>
<dbReference type="MIM" id="620506">
    <property type="type" value="gene"/>
</dbReference>
<dbReference type="neXtProt" id="NX_Q9NQC8"/>
<dbReference type="OpenTargets" id="ENSG00000118096"/>
<dbReference type="PharmGKB" id="PA165543409"/>
<dbReference type="VEuPathDB" id="HostDB:ENSG00000118096"/>
<dbReference type="GeneTree" id="ENSGT00390000005544"/>
<dbReference type="HOGENOM" id="CLU_039364_1_0_1"/>
<dbReference type="InParanoid" id="Q9NQC8"/>
<dbReference type="OrthoDB" id="2119217at2759"/>
<dbReference type="PAN-GO" id="Q9NQC8">
    <property type="GO annotations" value="5 GO annotations based on evolutionary models"/>
</dbReference>
<dbReference type="PhylomeDB" id="Q9NQC8"/>
<dbReference type="TreeFam" id="TF314221"/>
<dbReference type="PathwayCommons" id="Q9NQC8"/>
<dbReference type="Reactome" id="R-HSA-5620924">
    <property type="pathway name" value="Intraflagellar transport"/>
</dbReference>
<dbReference type="SignaLink" id="Q9NQC8"/>
<dbReference type="BioGRID-ORCS" id="56912">
    <property type="hits" value="8 hits in 1154 CRISPR screens"/>
</dbReference>
<dbReference type="ChiTaRS" id="IFT46">
    <property type="organism name" value="human"/>
</dbReference>
<dbReference type="GeneWiki" id="C11orf60"/>
<dbReference type="GenomeRNAi" id="56912"/>
<dbReference type="Pharos" id="Q9NQC8">
    <property type="development level" value="Tdark"/>
</dbReference>
<dbReference type="PRO" id="PR:Q9NQC8"/>
<dbReference type="Proteomes" id="UP000005640">
    <property type="component" value="Chromosome 11"/>
</dbReference>
<dbReference type="RNAct" id="Q9NQC8">
    <property type="molecule type" value="protein"/>
</dbReference>
<dbReference type="Bgee" id="ENSG00000118096">
    <property type="expression patterns" value="Expressed in right uterine tube and 197 other cell types or tissues"/>
</dbReference>
<dbReference type="ExpressionAtlas" id="Q9NQC8">
    <property type="expression patterns" value="baseline and differential"/>
</dbReference>
<dbReference type="GO" id="GO:0005813">
    <property type="term" value="C:centrosome"/>
    <property type="evidence" value="ECO:0007669"/>
    <property type="project" value="Ensembl"/>
</dbReference>
<dbReference type="GO" id="GO:0097542">
    <property type="term" value="C:ciliary tip"/>
    <property type="evidence" value="ECO:0000304"/>
    <property type="project" value="Reactome"/>
</dbReference>
<dbReference type="GO" id="GO:0005929">
    <property type="term" value="C:cilium"/>
    <property type="evidence" value="ECO:0000304"/>
    <property type="project" value="Reactome"/>
</dbReference>
<dbReference type="GO" id="GO:0005737">
    <property type="term" value="C:cytoplasm"/>
    <property type="evidence" value="ECO:0000314"/>
    <property type="project" value="LIFEdb"/>
</dbReference>
<dbReference type="GO" id="GO:0030992">
    <property type="term" value="C:intraciliary transport particle B"/>
    <property type="evidence" value="ECO:0000353"/>
    <property type="project" value="ComplexPortal"/>
</dbReference>
<dbReference type="GO" id="GO:0005815">
    <property type="term" value="C:microtubule organizing center"/>
    <property type="evidence" value="ECO:0000318"/>
    <property type="project" value="GO_Central"/>
</dbReference>
<dbReference type="GO" id="GO:0031514">
    <property type="term" value="C:motile cilium"/>
    <property type="evidence" value="ECO:0000250"/>
    <property type="project" value="BHF-UCL"/>
</dbReference>
<dbReference type="GO" id="GO:0060271">
    <property type="term" value="P:cilium assembly"/>
    <property type="evidence" value="ECO:0000250"/>
    <property type="project" value="BHF-UCL"/>
</dbReference>
<dbReference type="GO" id="GO:0035720">
    <property type="term" value="P:intraciliary anterograde transport"/>
    <property type="evidence" value="ECO:0000303"/>
    <property type="project" value="ComplexPortal"/>
</dbReference>
<dbReference type="GO" id="GO:0042073">
    <property type="term" value="P:intraciliary transport"/>
    <property type="evidence" value="ECO:0000250"/>
    <property type="project" value="BHF-UCL"/>
</dbReference>
<dbReference type="GO" id="GO:0050821">
    <property type="term" value="P:protein stabilization"/>
    <property type="evidence" value="ECO:0000250"/>
    <property type="project" value="BHF-UCL"/>
</dbReference>
<dbReference type="GO" id="GO:0007224">
    <property type="term" value="P:smoothened signaling pathway"/>
    <property type="evidence" value="ECO:0007669"/>
    <property type="project" value="Ensembl"/>
</dbReference>
<dbReference type="InterPro" id="IPR022088">
    <property type="entry name" value="Intraflagellar_transp_cmplxB"/>
</dbReference>
<dbReference type="PANTHER" id="PTHR13376">
    <property type="entry name" value="INTRAFLAGELLAR TRANSPORT PROTEIN 46 HOMOLOG"/>
    <property type="match status" value="1"/>
</dbReference>
<dbReference type="PANTHER" id="PTHR13376:SF0">
    <property type="entry name" value="INTRAFLAGELLAR TRANSPORT PROTEIN 46 HOMOLOG"/>
    <property type="match status" value="1"/>
</dbReference>
<dbReference type="Pfam" id="PF12317">
    <property type="entry name" value="IFT46_B_C"/>
    <property type="match status" value="1"/>
</dbReference>
<sequence length="304" mass="34286">MADNSSDECEEENNKEKKKTSQLTPQRGFSENEDDDDDDDDSSETDSDSDDDDEEHGAPLEGAYDPADYEHLPVSAEIKELFQYISRYTPQLIDLDHKLKPFIPDFIPAVGDIDAFLKVPRPDGKPDNLGLLVLDEPSTKQSDPTVLSLWLTENSKQHNITQHMKVKSLEDAEKNPKAIDTWIESISELHRSKPPATVHYTRPMPDIDTLMQEWSPEFEELLGKVSLPTAEIDCSLAEYIDMICAILDIPVYKSRIQSLHLLFSLYSEFKNSQHFKALAEGKKAFTPSSNSTSQAGDMETLTFS</sequence>
<evidence type="ECO:0000250" key="1"/>
<evidence type="ECO:0000250" key="2">
    <source>
        <dbReference type="UniProtKB" id="Q9DB07"/>
    </source>
</evidence>
<evidence type="ECO:0000256" key="3">
    <source>
        <dbReference type="SAM" id="MobiDB-lite"/>
    </source>
</evidence>
<evidence type="ECO:0000269" key="4">
    <source>
    </source>
</evidence>
<evidence type="ECO:0000269" key="5">
    <source>
    </source>
</evidence>
<evidence type="ECO:0000269" key="6">
    <source>
    </source>
</evidence>
<evidence type="ECO:0000303" key="7">
    <source>
    </source>
</evidence>
<evidence type="ECO:0000305" key="8"/>
<evidence type="ECO:0000305" key="9">
    <source>
    </source>
</evidence>
<protein>
    <recommendedName>
        <fullName>Intraflagellar transport protein 46 homolog</fullName>
    </recommendedName>
</protein>
<keyword id="KW-0025">Alternative splicing</keyword>
<keyword id="KW-0966">Cell projection</keyword>
<keyword id="KW-0969">Cilium</keyword>
<keyword id="KW-0963">Cytoplasm</keyword>
<keyword id="KW-0206">Cytoskeleton</keyword>
<keyword id="KW-0597">Phosphoprotein</keyword>
<keyword id="KW-1267">Proteomics identification</keyword>
<keyword id="KW-1185">Reference proteome</keyword>
<organism>
    <name type="scientific">Homo sapiens</name>
    <name type="common">Human</name>
    <dbReference type="NCBI Taxonomy" id="9606"/>
    <lineage>
        <taxon>Eukaryota</taxon>
        <taxon>Metazoa</taxon>
        <taxon>Chordata</taxon>
        <taxon>Craniata</taxon>
        <taxon>Vertebrata</taxon>
        <taxon>Euteleostomi</taxon>
        <taxon>Mammalia</taxon>
        <taxon>Eutheria</taxon>
        <taxon>Euarchontoglires</taxon>
        <taxon>Primates</taxon>
        <taxon>Haplorrhini</taxon>
        <taxon>Catarrhini</taxon>
        <taxon>Hominidae</taxon>
        <taxon>Homo</taxon>
    </lineage>
</organism>
<gene>
    <name type="primary">IFT46</name>
    <name type="synonym">C11orf2</name>
    <name type="synonym">C11orf60</name>
</gene>
<feature type="chain" id="PRO_0000085516" description="Intraflagellar transport protein 46 homolog">
    <location>
        <begin position="1"/>
        <end position="304"/>
    </location>
</feature>
<feature type="region of interest" description="Disordered" evidence="3">
    <location>
        <begin position="1"/>
        <end position="67"/>
    </location>
</feature>
<feature type="region of interest" description="Disordered" evidence="3">
    <location>
        <begin position="285"/>
        <end position="304"/>
    </location>
</feature>
<feature type="compositionally biased region" description="Acidic residues" evidence="3">
    <location>
        <begin position="1"/>
        <end position="13"/>
    </location>
</feature>
<feature type="compositionally biased region" description="Acidic residues" evidence="3">
    <location>
        <begin position="31"/>
        <end position="55"/>
    </location>
</feature>
<feature type="compositionally biased region" description="Polar residues" evidence="3">
    <location>
        <begin position="286"/>
        <end position="304"/>
    </location>
</feature>
<feature type="modified residue" description="Phosphothreonine" evidence="2">
    <location>
        <position position="286"/>
    </location>
</feature>
<feature type="splice variant" id="VSP_039859" description="In isoform 2." evidence="7">
    <original>K</original>
    <variation>KVLREGMPQAPGHRGKDMDPVPPAPASLKCHQTPSHVLERVGWYRESQKHRK</variation>
    <location>
        <position position="15"/>
    </location>
</feature>
<feature type="sequence variant" id="VAR_057533" description="In dbSNP:rs11552421." evidence="4">
    <original>C</original>
    <variation>Y</variation>
    <location>
        <position position="9"/>
    </location>
</feature>
<feature type="sequence conflict" description="In Ref. 3; BAB15146." evidence="8" ref="3">
    <original>N</original>
    <variation>S</variation>
    <location>
        <position position="14"/>
    </location>
</feature>
<feature type="sequence conflict" description="In Ref. 3; BAB15146." evidence="8" ref="3">
    <original>K</original>
    <variation>E</variation>
    <location>
        <position position="19"/>
    </location>
</feature>
<feature type="sequence conflict" description="In Ref. 3; BAF82210." evidence="8" ref="3">
    <original>D</original>
    <variation>G</variation>
    <location>
        <position position="37"/>
    </location>
</feature>
<name>IFT46_HUMAN</name>
<proteinExistence type="evidence at protein level"/>
<accession>Q9NQC8</accession>
<accession>A8K0F6</accession>
<accession>Q9H6V5</accession>